<name>CK5P3_ARATH</name>
<comment type="function">
    <text evidence="2">Substrate adapter of E3 ligase complexes mediating ufmylation, the covalent attachment of the ubiquitin-like modifier UFM1 to substrate proteins, and which is involved in various processes, such as ribosome recycling and reticulophagy (also called ER-phagy).</text>
</comment>
<comment type="subunit">
    <text evidence="1 2 3">Substrate adapter component of the UFM1 ribosome E3 ligase (UREL) complex (By similarity). Interacts with ATG8 family proteins (PubMed:32851973, PubMed:36762703).</text>
</comment>
<comment type="domain">
    <text evidence="2 3">The shuffled ATG8-binding motifs mediate interaction with both ATG8 family protein and UFM1.</text>
</comment>
<comment type="similarity">
    <text evidence="4">Belongs to the CDK5RAP3 family.</text>
</comment>
<comment type="sequence caution" evidence="4">
    <conflict type="erroneous gene model prediction">
        <sequence resource="EMBL-CDS" id="BAB09818"/>
    </conflict>
</comment>
<keyword id="KW-1185">Reference proteome</keyword>
<keyword id="KW-0833">Ubl conjugation pathway</keyword>
<proteinExistence type="evidence at protein level"/>
<sequence length="549" mass="62129">MPSQDDVQNLPIDITFSRLGEWLVDRKRIPADWRKRVAVIRVKILKEFSSLPKEIDPFFQTLDPEVIGYLEVKKVYEILLKTTPESRNIFGRLSGASGVWEAIVRAFEKDHIYLGEAAQIIIQNVNYEIPYLKKQVQKVQQQMTELDRKEADIKRSVALSATKYEDACRELGLQGNNVRRELLETASSLPSTFSKILEVINSDSVTGAMEYYSAYVQDVHTEKDKPLRIVLQNLKYIRENPPSLSVFGDSEGLDADNIQSSENANGTDAAADSIDWDITVETPEIDWDVSMVEEVDSGNDLGSYEIVNASDIPENSPFKVEESQGLEVDVSEISWDVSVETPQVEEIGDSALLESNQTQLTDSTTQVLGSGGERSQLLETEYRNKILDDLYEVKAFLNQRLIELRNEDTLSLQHHVQAVSPMVLQQYSPETIEPMVVDISMAISLLTNKKSRDLIMILNSKRFLDRLVSELEEKKHREVKLRESLKDVGRRRMELQNSLSAIWPKQEAALSKTRELKELCETSLSSMFDGRPVNIRGEINTLLNAGVSA</sequence>
<evidence type="ECO:0000250" key="1">
    <source>
        <dbReference type="UniProtKB" id="Q96JB5"/>
    </source>
</evidence>
<evidence type="ECO:0000269" key="2">
    <source>
    </source>
</evidence>
<evidence type="ECO:0000269" key="3">
    <source>
    </source>
</evidence>
<evidence type="ECO:0000305" key="4"/>
<feature type="chain" id="PRO_0000220522" description="CDK5RAP3 protein homolog">
    <location>
        <begin position="1"/>
        <end position="549"/>
    </location>
</feature>
<feature type="short sequence motif" description="Shuffled ATG8-binding motif 1" evidence="2">
    <location>
        <begin position="274"/>
        <end position="277"/>
    </location>
</feature>
<feature type="short sequence motif" description="Shuffled ATG8-binding motif 2" evidence="2">
    <location>
        <begin position="285"/>
        <end position="288"/>
    </location>
</feature>
<feature type="short sequence motif" description="Shuffled ATG8-binding motif 3" evidence="2">
    <location>
        <begin position="333"/>
        <end position="336"/>
    </location>
</feature>
<feature type="mutagenesis site" description="Abolished interaction with ATG8 family proteins; when associated with A-287 and A-335." evidence="3">
    <original>W</original>
    <variation>A</variation>
    <location>
        <position position="276"/>
    </location>
</feature>
<feature type="mutagenesis site" description="Abolished interaction with ATG8 family proteins; when associated with A-276 and A-287." evidence="3">
    <original>W</original>
    <variation>A</variation>
    <location>
        <position position="287"/>
    </location>
</feature>
<feature type="mutagenesis site" description="Abolished interaction with ATG8 family proteins; when associated with A-276 and A-335." evidence="3">
    <original>W</original>
    <variation>A</variation>
    <location>
        <position position="335"/>
    </location>
</feature>
<feature type="sequence conflict" description="In Ref. 3; ABF57287." evidence="4" ref="3">
    <original>T</original>
    <variation>N</variation>
    <location>
        <position position="162"/>
    </location>
</feature>
<accession>Q9FG23</accession>
<accession>Q1JPM2</accession>
<organism>
    <name type="scientific">Arabidopsis thaliana</name>
    <name type="common">Mouse-ear cress</name>
    <dbReference type="NCBI Taxonomy" id="3702"/>
    <lineage>
        <taxon>Eukaryota</taxon>
        <taxon>Viridiplantae</taxon>
        <taxon>Streptophyta</taxon>
        <taxon>Embryophyta</taxon>
        <taxon>Tracheophyta</taxon>
        <taxon>Spermatophyta</taxon>
        <taxon>Magnoliopsida</taxon>
        <taxon>eudicotyledons</taxon>
        <taxon>Gunneridae</taxon>
        <taxon>Pentapetalae</taxon>
        <taxon>rosids</taxon>
        <taxon>malvids</taxon>
        <taxon>Brassicales</taxon>
        <taxon>Brassicaceae</taxon>
        <taxon>Camelineae</taxon>
        <taxon>Arabidopsis</taxon>
    </lineage>
</organism>
<protein>
    <recommendedName>
        <fullName>CDK5RAP3 protein homolog</fullName>
    </recommendedName>
</protein>
<dbReference type="EMBL" id="AP002032">
    <property type="protein sequence ID" value="BAB09818.1"/>
    <property type="status" value="ALT_SEQ"/>
    <property type="molecule type" value="Genomic_DNA"/>
</dbReference>
<dbReference type="EMBL" id="CP002688">
    <property type="protein sequence ID" value="AED91071.1"/>
    <property type="molecule type" value="Genomic_DNA"/>
</dbReference>
<dbReference type="EMBL" id="BT025331">
    <property type="protein sequence ID" value="ABF57287.1"/>
    <property type="molecule type" value="mRNA"/>
</dbReference>
<dbReference type="RefSeq" id="NP_196301.2">
    <property type="nucleotide sequence ID" value="NM_120766.4"/>
</dbReference>
<dbReference type="SMR" id="Q9FG23"/>
<dbReference type="BioGRID" id="15853">
    <property type="interactions" value="2"/>
</dbReference>
<dbReference type="FunCoup" id="Q9FG23">
    <property type="interactions" value="3450"/>
</dbReference>
<dbReference type="STRING" id="3702.Q9FG23"/>
<dbReference type="PaxDb" id="3702-AT5G06830.1"/>
<dbReference type="ProteomicsDB" id="246809"/>
<dbReference type="EnsemblPlants" id="AT5G06830.1">
    <property type="protein sequence ID" value="AT5G06830.1"/>
    <property type="gene ID" value="AT5G06830"/>
</dbReference>
<dbReference type="GeneID" id="830574"/>
<dbReference type="Gramene" id="AT5G06830.1">
    <property type="protein sequence ID" value="AT5G06830.1"/>
    <property type="gene ID" value="AT5G06830"/>
</dbReference>
<dbReference type="KEGG" id="ath:AT5G06830"/>
<dbReference type="Araport" id="AT5G06830"/>
<dbReference type="TAIR" id="AT5G06830"/>
<dbReference type="eggNOG" id="KOG2607">
    <property type="taxonomic scope" value="Eukaryota"/>
</dbReference>
<dbReference type="HOGENOM" id="CLU_025645_1_0_1"/>
<dbReference type="InParanoid" id="Q9FG23"/>
<dbReference type="OMA" id="CRLYEKN"/>
<dbReference type="PhylomeDB" id="Q9FG23"/>
<dbReference type="PRO" id="PR:Q9FG23"/>
<dbReference type="Proteomes" id="UP000006548">
    <property type="component" value="Chromosome 5"/>
</dbReference>
<dbReference type="ExpressionAtlas" id="Q9FG23">
    <property type="expression patterns" value="baseline and differential"/>
</dbReference>
<dbReference type="GO" id="GO:0140501">
    <property type="term" value="P:positive regulation of reticulophagy"/>
    <property type="evidence" value="ECO:0000315"/>
    <property type="project" value="UniProtKB"/>
</dbReference>
<dbReference type="GO" id="GO:0000079">
    <property type="term" value="P:regulation of cyclin-dependent protein serine/threonine kinase activity"/>
    <property type="evidence" value="ECO:0000250"/>
    <property type="project" value="UniProtKB"/>
</dbReference>
<dbReference type="GO" id="GO:0072344">
    <property type="term" value="P:rescue of stalled ribosome"/>
    <property type="evidence" value="ECO:0000315"/>
    <property type="project" value="UniProtKB"/>
</dbReference>
<dbReference type="InterPro" id="IPR008491">
    <property type="entry name" value="CDK5RAP3"/>
</dbReference>
<dbReference type="PANTHER" id="PTHR14894">
    <property type="entry name" value="CDK5 REGULATORY SUBUNIT-ASSOCIATED PROTEIN 3"/>
    <property type="match status" value="1"/>
</dbReference>
<dbReference type="PANTHER" id="PTHR14894:SF0">
    <property type="entry name" value="CDK5 REGULATORY SUBUNIT-ASSOCIATED PROTEIN 3"/>
    <property type="match status" value="1"/>
</dbReference>
<dbReference type="Pfam" id="PF05600">
    <property type="entry name" value="CDK5RAP3"/>
    <property type="match status" value="1"/>
</dbReference>
<reference key="1">
    <citation type="submission" date="2000-05" db="EMBL/GenBank/DDBJ databases">
        <title>Structural analysis of Arabidopsis thaliana chromosome 5. XI.</title>
        <authorList>
            <person name="Kaneko T."/>
            <person name="Katoh T."/>
            <person name="Asamizu E."/>
            <person name="Sato S."/>
            <person name="Nakamura Y."/>
            <person name="Kotani H."/>
            <person name="Tabata S."/>
        </authorList>
    </citation>
    <scope>NUCLEOTIDE SEQUENCE [LARGE SCALE GENOMIC DNA]</scope>
    <source>
        <strain>cv. Columbia</strain>
    </source>
</reference>
<reference key="2">
    <citation type="journal article" date="2017" name="Plant J.">
        <title>Araport11: a complete reannotation of the Arabidopsis thaliana reference genome.</title>
        <authorList>
            <person name="Cheng C.Y."/>
            <person name="Krishnakumar V."/>
            <person name="Chan A.P."/>
            <person name="Thibaud-Nissen F."/>
            <person name="Schobel S."/>
            <person name="Town C.D."/>
        </authorList>
    </citation>
    <scope>GENOME REANNOTATION</scope>
    <source>
        <strain>cv. Columbia</strain>
    </source>
</reference>
<reference key="3">
    <citation type="submission" date="2006-05" db="EMBL/GenBank/DDBJ databases">
        <title>Arabidopsis ORF clones.</title>
        <authorList>
            <person name="Shinn P."/>
            <person name="Chen H."/>
            <person name="Kim C.J."/>
            <person name="Quinitio C."/>
            <person name="Ecker J.R."/>
        </authorList>
    </citation>
    <scope>NUCLEOTIDE SEQUENCE [LARGE SCALE MRNA]</scope>
    <source>
        <strain>cv. Columbia</strain>
    </source>
</reference>
<reference key="4">
    <citation type="journal article" date="2020" name="Elife">
        <title>A cross-kingdom conserved ER-phagy receptor maintains endoplasmic reticulum homeostasis during stress.</title>
        <authorList>
            <person name="Stephani M."/>
            <person name="Picchianti L."/>
            <person name="Gajic A."/>
            <person name="Beveridge R."/>
            <person name="Skarwan E."/>
            <person name="Sanchez de Medina Hernandez V."/>
            <person name="Mohseni A."/>
            <person name="Clavel M."/>
            <person name="Zeng Y."/>
            <person name="Naumann C."/>
            <person name="Matuszkiewicz M."/>
            <person name="Turco E."/>
            <person name="Loefke C."/>
            <person name="Li B."/>
            <person name="Duernberger G."/>
            <person name="Schutzbier M."/>
            <person name="Chen H.T."/>
            <person name="Abdrakhmanov A."/>
            <person name="Savova A."/>
            <person name="Chia K.S."/>
            <person name="Djamei A."/>
            <person name="Schaffner I."/>
            <person name="Abel S."/>
            <person name="Jiang L."/>
            <person name="Mechtler K."/>
            <person name="Ikeda F."/>
            <person name="Martens S."/>
            <person name="Clausen T."/>
            <person name="Dagdas Y."/>
        </authorList>
    </citation>
    <scope>FUNCTION</scope>
    <scope>INTERACTION WITH ATG8 FAMILY PROTEINS</scope>
    <scope>DOMAIN</scope>
</reference>
<reference key="5">
    <citation type="journal article" date="2023" name="EMBO J.">
        <title>Shuffled ATG8 interacting motifs form an ancestral bridge between UFMylation and autophagy.</title>
        <authorList>
            <person name="Picchianti L."/>
            <person name="Sanchez de Medina Hernandez V."/>
            <person name="Zhan N."/>
            <person name="Irwin N.A."/>
            <person name="Groh R."/>
            <person name="Stephani M."/>
            <person name="Hornegger H."/>
            <person name="Beveridge R."/>
            <person name="Sawa-Makarska J."/>
            <person name="Lendl T."/>
            <person name="Grujic N."/>
            <person name="Naumann C."/>
            <person name="Martens S."/>
            <person name="Richards T.A."/>
            <person name="Clausen T."/>
            <person name="Ramundo S."/>
            <person name="Karagoez G.E."/>
            <person name="Dagdas Y."/>
        </authorList>
    </citation>
    <scope>INTERACTION WITH ATG8 FAMILY PROTEINS</scope>
    <scope>DOMAIN</scope>
    <scope>MUTAGENESIS OF TRP-276; TRP-287 AND TRP-335</scope>
</reference>
<gene>
    <name type="ordered locus">At5g06830</name>
    <name type="ORF">MPH15.20</name>
</gene>